<protein>
    <recommendedName>
        <fullName evidence="1">Rhomboid protease GlpG</fullName>
        <ecNumber evidence="1">3.4.21.105</ecNumber>
    </recommendedName>
    <alternativeName>
        <fullName evidence="1">Intramembrane serine protease</fullName>
    </alternativeName>
</protein>
<feature type="chain" id="PRO_0000321691" description="Rhomboid protease GlpG">
    <location>
        <begin position="1"/>
        <end position="276"/>
    </location>
</feature>
<feature type="transmembrane region" description="Helical" evidence="1">
    <location>
        <begin position="94"/>
        <end position="114"/>
    </location>
</feature>
<feature type="transmembrane region" description="Helical" evidence="1">
    <location>
        <begin position="142"/>
        <end position="162"/>
    </location>
</feature>
<feature type="transmembrane region" description="Helical" evidence="1">
    <location>
        <begin position="169"/>
        <end position="189"/>
    </location>
</feature>
<feature type="transmembrane region" description="Helical" evidence="1">
    <location>
        <begin position="192"/>
        <end position="212"/>
    </location>
</feature>
<feature type="transmembrane region" description="Helical" evidence="1">
    <location>
        <begin position="229"/>
        <end position="249"/>
    </location>
</feature>
<feature type="transmembrane region" description="Helical" evidence="1">
    <location>
        <begin position="250"/>
        <end position="270"/>
    </location>
</feature>
<feature type="active site" description="Nucleophile" evidence="1">
    <location>
        <position position="201"/>
    </location>
</feature>
<feature type="active site" evidence="1">
    <location>
        <position position="254"/>
    </location>
</feature>
<dbReference type="EC" id="3.4.21.105" evidence="1"/>
<dbReference type="EMBL" id="AE006468">
    <property type="protein sequence ID" value="AAL22385.1"/>
    <property type="molecule type" value="Genomic_DNA"/>
</dbReference>
<dbReference type="RefSeq" id="NP_462426.1">
    <property type="nucleotide sequence ID" value="NC_003197.2"/>
</dbReference>
<dbReference type="RefSeq" id="WP_000928699.1">
    <property type="nucleotide sequence ID" value="NC_003197.2"/>
</dbReference>
<dbReference type="SMR" id="Q8ZLH5"/>
<dbReference type="STRING" id="99287.STM3524"/>
<dbReference type="MEROPS" id="S54.016"/>
<dbReference type="PaxDb" id="99287-STM3524"/>
<dbReference type="GeneID" id="1255047"/>
<dbReference type="KEGG" id="stm:STM3524"/>
<dbReference type="PATRIC" id="fig|99287.12.peg.3725"/>
<dbReference type="HOGENOM" id="CLU_058989_0_0_6"/>
<dbReference type="OMA" id="LLGHCWI"/>
<dbReference type="PhylomeDB" id="Q8ZLH5"/>
<dbReference type="BioCyc" id="SENT99287:STM3524-MONOMER"/>
<dbReference type="Proteomes" id="UP000001014">
    <property type="component" value="Chromosome"/>
</dbReference>
<dbReference type="GO" id="GO:0005886">
    <property type="term" value="C:plasma membrane"/>
    <property type="evidence" value="ECO:0007669"/>
    <property type="project" value="UniProtKB-SubCell"/>
</dbReference>
<dbReference type="GO" id="GO:0004252">
    <property type="term" value="F:serine-type endopeptidase activity"/>
    <property type="evidence" value="ECO:0000318"/>
    <property type="project" value="GO_Central"/>
</dbReference>
<dbReference type="GO" id="GO:0006508">
    <property type="term" value="P:proteolysis"/>
    <property type="evidence" value="ECO:0007669"/>
    <property type="project" value="UniProtKB-UniRule"/>
</dbReference>
<dbReference type="FunFam" id="1.20.1540.10:FF:000003">
    <property type="entry name" value="Rhomboid protease GlpG"/>
    <property type="match status" value="1"/>
</dbReference>
<dbReference type="FunFam" id="3.30.70.2350:FF:000001">
    <property type="entry name" value="Rhomboid protease GlpG"/>
    <property type="match status" value="1"/>
</dbReference>
<dbReference type="Gene3D" id="3.30.70.2350">
    <property type="match status" value="1"/>
</dbReference>
<dbReference type="Gene3D" id="1.20.1540.10">
    <property type="entry name" value="Rhomboid-like"/>
    <property type="match status" value="1"/>
</dbReference>
<dbReference type="HAMAP" id="MF_01594">
    <property type="entry name" value="Rhomboid_GlpG"/>
    <property type="match status" value="1"/>
</dbReference>
<dbReference type="InterPro" id="IPR038236">
    <property type="entry name" value="GlpG_N_sf"/>
</dbReference>
<dbReference type="InterPro" id="IPR022732">
    <property type="entry name" value="Peptidase_S54_GlpG_N"/>
</dbReference>
<dbReference type="InterPro" id="IPR022764">
    <property type="entry name" value="Peptidase_S54_rhomboid_dom"/>
</dbReference>
<dbReference type="InterPro" id="IPR035952">
    <property type="entry name" value="Rhomboid-like_sf"/>
</dbReference>
<dbReference type="InterPro" id="IPR023662">
    <property type="entry name" value="Rhomboid_protease_GlpG"/>
</dbReference>
<dbReference type="NCBIfam" id="NF008155">
    <property type="entry name" value="PRK10907.1"/>
    <property type="match status" value="1"/>
</dbReference>
<dbReference type="NCBIfam" id="TIGR04239">
    <property type="entry name" value="rhombo_GlpG"/>
    <property type="match status" value="1"/>
</dbReference>
<dbReference type="PANTHER" id="PTHR43066:SF26">
    <property type="entry name" value="RHOMBOID PROTEASE GLPG"/>
    <property type="match status" value="1"/>
</dbReference>
<dbReference type="PANTHER" id="PTHR43066">
    <property type="entry name" value="RHOMBOID-RELATED PROTEIN"/>
    <property type="match status" value="1"/>
</dbReference>
<dbReference type="Pfam" id="PF01694">
    <property type="entry name" value="Rhomboid"/>
    <property type="match status" value="1"/>
</dbReference>
<dbReference type="Pfam" id="PF12122">
    <property type="entry name" value="Rhomboid_N"/>
    <property type="match status" value="1"/>
</dbReference>
<dbReference type="SUPFAM" id="SSF144091">
    <property type="entry name" value="Rhomboid-like"/>
    <property type="match status" value="1"/>
</dbReference>
<evidence type="ECO:0000255" key="1">
    <source>
        <dbReference type="HAMAP-Rule" id="MF_01594"/>
    </source>
</evidence>
<organism>
    <name type="scientific">Salmonella typhimurium (strain LT2 / SGSC1412 / ATCC 700720)</name>
    <dbReference type="NCBI Taxonomy" id="99287"/>
    <lineage>
        <taxon>Bacteria</taxon>
        <taxon>Pseudomonadati</taxon>
        <taxon>Pseudomonadota</taxon>
        <taxon>Gammaproteobacteria</taxon>
        <taxon>Enterobacterales</taxon>
        <taxon>Enterobacteriaceae</taxon>
        <taxon>Salmonella</taxon>
    </lineage>
</organism>
<reference key="1">
    <citation type="journal article" date="2001" name="Nature">
        <title>Complete genome sequence of Salmonella enterica serovar Typhimurium LT2.</title>
        <authorList>
            <person name="McClelland M."/>
            <person name="Sanderson K.E."/>
            <person name="Spieth J."/>
            <person name="Clifton S.W."/>
            <person name="Latreille P."/>
            <person name="Courtney L."/>
            <person name="Porwollik S."/>
            <person name="Ali J."/>
            <person name="Dante M."/>
            <person name="Du F."/>
            <person name="Hou S."/>
            <person name="Layman D."/>
            <person name="Leonard S."/>
            <person name="Nguyen C."/>
            <person name="Scott K."/>
            <person name="Holmes A."/>
            <person name="Grewal N."/>
            <person name="Mulvaney E."/>
            <person name="Ryan E."/>
            <person name="Sun H."/>
            <person name="Florea L."/>
            <person name="Miller W."/>
            <person name="Stoneking T."/>
            <person name="Nhan M."/>
            <person name="Waterston R."/>
            <person name="Wilson R.K."/>
        </authorList>
    </citation>
    <scope>NUCLEOTIDE SEQUENCE [LARGE SCALE GENOMIC DNA]</scope>
    <source>
        <strain>LT2 / SGSC1412 / ATCC 700720</strain>
    </source>
</reference>
<proteinExistence type="inferred from homology"/>
<name>GLPG_SALTY</name>
<keyword id="KW-0997">Cell inner membrane</keyword>
<keyword id="KW-1003">Cell membrane</keyword>
<keyword id="KW-0378">Hydrolase</keyword>
<keyword id="KW-0472">Membrane</keyword>
<keyword id="KW-0645">Protease</keyword>
<keyword id="KW-1185">Reference proteome</keyword>
<keyword id="KW-0720">Serine protease</keyword>
<keyword id="KW-0812">Transmembrane</keyword>
<keyword id="KW-1133">Transmembrane helix</keyword>
<comment type="function">
    <text evidence="1">Rhomboid-type serine protease that catalyzes intramembrane proteolysis.</text>
</comment>
<comment type="catalytic activity">
    <reaction evidence="1">
        <text>Cleaves type-1 transmembrane domains using a catalytic dyad composed of serine and histidine that are contributed by different transmembrane domains.</text>
        <dbReference type="EC" id="3.4.21.105"/>
    </reaction>
</comment>
<comment type="subcellular location">
    <subcellularLocation>
        <location evidence="1">Cell inner membrane</location>
        <topology evidence="1">Multi-pass membrane protein</topology>
    </subcellularLocation>
</comment>
<comment type="similarity">
    <text evidence="1">Belongs to the peptidase S54 family.</text>
</comment>
<gene>
    <name evidence="1" type="primary">glpG</name>
    <name type="ordered locus">STM3524</name>
</gene>
<sequence length="276" mass="31399">MLMITSFANPRVAQAFVDYMATQGVILTIQQHNQSDIWLADESQAERVRGELARFIENPGDPRYLAASWQSGQTNSGLRYRRFPFLATLRERAGPVTWIVMLACVLVYIAMSLIGDQTVMVWLAWPFDPVLKFEVWRYFTHIFMHFSLMHILFNLLWWWYLGGAVEKRLGSGKLIVITVISALLSGYVQQKFSGPWFGGLSGVVYALMGYVWLRGERDPQSGIYLQRGLIIFALLWIVAGWFDWFGMSMANGAHIAGLIVGLAMAFVDTLNARKRT</sequence>
<accession>Q8ZLH5</accession>